<proteinExistence type="evidence at transcript level"/>
<feature type="chain" id="PRO_0000191493" description="Sperm protamine P1">
    <location>
        <begin position="1"/>
        <end position="62"/>
    </location>
</feature>
<feature type="region of interest" description="Disordered" evidence="1">
    <location>
        <begin position="1"/>
        <end position="62"/>
    </location>
</feature>
<sequence length="62" mass="8702">MARYRHSRSRSRSRYRRRRRRRSRYRSRRRRYRGRRRRRSRRGRRRRGYSRRRYSRRRRRRY</sequence>
<evidence type="ECO:0000256" key="1">
    <source>
        <dbReference type="SAM" id="MobiDB-lite"/>
    </source>
</evidence>
<evidence type="ECO:0000305" key="2"/>
<accession>P67842</accession>
<accession>P42141</accession>
<accession>P42153</accession>
<dbReference type="EMBL" id="L35329">
    <property type="protein sequence ID" value="AAA74610.1"/>
    <property type="molecule type" value="Genomic_DNA"/>
</dbReference>
<dbReference type="GO" id="GO:0000786">
    <property type="term" value="C:nucleosome"/>
    <property type="evidence" value="ECO:0007669"/>
    <property type="project" value="UniProtKB-KW"/>
</dbReference>
<dbReference type="GO" id="GO:0005634">
    <property type="term" value="C:nucleus"/>
    <property type="evidence" value="ECO:0007669"/>
    <property type="project" value="UniProtKB-SubCell"/>
</dbReference>
<dbReference type="GO" id="GO:0003677">
    <property type="term" value="F:DNA binding"/>
    <property type="evidence" value="ECO:0007669"/>
    <property type="project" value="UniProtKB-KW"/>
</dbReference>
<dbReference type="GO" id="GO:0030261">
    <property type="term" value="P:chromosome condensation"/>
    <property type="evidence" value="ECO:0007669"/>
    <property type="project" value="UniProtKB-KW"/>
</dbReference>
<dbReference type="GO" id="GO:0035092">
    <property type="term" value="P:sperm DNA condensation"/>
    <property type="evidence" value="ECO:0007669"/>
    <property type="project" value="InterPro"/>
</dbReference>
<dbReference type="InterPro" id="IPR000221">
    <property type="entry name" value="Protamine_P1"/>
</dbReference>
<dbReference type="PROSITE" id="PS00048">
    <property type="entry name" value="PROTAMINE_P1"/>
    <property type="match status" value="1"/>
</dbReference>
<name>HSP1_NOTRU</name>
<reference key="1">
    <citation type="journal article" date="1995" name="Proc. R. Soc. B">
        <title>Molecular phylogeny and evolution of marsupial protamine P1 genes.</title>
        <authorList>
            <person name="Retief J.D."/>
            <person name="Krajewski C."/>
            <person name="Westerman M."/>
            <person name="Winkfein R.J."/>
            <person name="Dixon G.H."/>
        </authorList>
    </citation>
    <scope>NUCLEOTIDE SEQUENCE [GENOMIC DNA]</scope>
    <source>
        <tissue>Sperm</tissue>
    </source>
</reference>
<protein>
    <recommendedName>
        <fullName>Sperm protamine P1</fullName>
    </recommendedName>
</protein>
<gene>
    <name type="primary">PRM1</name>
</gene>
<organism>
    <name type="scientific">Notamacropus rufogriseus</name>
    <name type="common">Red-necked wallaby</name>
    <name type="synonym">Macropus rufogriseus</name>
    <dbReference type="NCBI Taxonomy" id="1960652"/>
    <lineage>
        <taxon>Eukaryota</taxon>
        <taxon>Metazoa</taxon>
        <taxon>Chordata</taxon>
        <taxon>Craniata</taxon>
        <taxon>Vertebrata</taxon>
        <taxon>Euteleostomi</taxon>
        <taxon>Mammalia</taxon>
        <taxon>Metatheria</taxon>
        <taxon>Diprotodontia</taxon>
        <taxon>Macropodidae</taxon>
        <taxon>Notamacropus</taxon>
    </lineage>
</organism>
<comment type="function">
    <text>Protamines substitute for histones in the chromatin of sperm during the haploid phase of spermatogenesis. They compact sperm DNA into a highly condensed, stable and inactive complex.</text>
</comment>
<comment type="subcellular location">
    <subcellularLocation>
        <location>Nucleus</location>
    </subcellularLocation>
    <subcellularLocation>
        <location>Chromosome</location>
    </subcellularLocation>
</comment>
<comment type="tissue specificity">
    <text>Testis.</text>
</comment>
<comment type="similarity">
    <text evidence="2">Belongs to the protamine P1 family.</text>
</comment>
<keyword id="KW-0158">Chromosome</keyword>
<keyword id="KW-0217">Developmental protein</keyword>
<keyword id="KW-0221">Differentiation</keyword>
<keyword id="KW-0226">DNA condensation</keyword>
<keyword id="KW-0238">DNA-binding</keyword>
<keyword id="KW-0544">Nucleosome core</keyword>
<keyword id="KW-0539">Nucleus</keyword>
<keyword id="KW-0744">Spermatogenesis</keyword>